<feature type="chain" id="PRO_0000444462" description="Polycomb group protein FIE1">
    <location>
        <begin position="1"/>
        <end position="376"/>
    </location>
</feature>
<feature type="repeat" description="WD 1" evidence="1">
    <location>
        <begin position="85"/>
        <end position="127"/>
    </location>
</feature>
<feature type="repeat" description="WD 2" evidence="1">
    <location>
        <begin position="130"/>
        <end position="170"/>
    </location>
</feature>
<feature type="repeat" description="WD 3" evidence="1">
    <location>
        <begin position="176"/>
        <end position="216"/>
    </location>
</feature>
<feature type="repeat" description="WD 4" evidence="1">
    <location>
        <begin position="242"/>
        <end position="279"/>
    </location>
</feature>
<feature type="repeat" description="WD 5" evidence="1">
    <location>
        <begin position="291"/>
        <end position="332"/>
    </location>
</feature>
<feature type="repeat" description="WD 6" evidence="1">
    <location>
        <begin position="339"/>
        <end position="376"/>
    </location>
</feature>
<feature type="sequence conflict" description="In Ref. 1; AAS13489." evidence="10" ref="1">
    <original>F</original>
    <variation>V</variation>
    <location>
        <position position="50"/>
    </location>
</feature>
<sequence length="376" mass="42036">MAKLGPGQGLGCEAAVGLLAPSRKREYKACNKLTEGKRPLYAIGFNFLDFHYYEVFATVGGNRVTTYSCLKDGNFAILQAYIDEDKDESFYTLSWACDLDGTPLLVAAGSNGIIRVINCATEKLLKTFVGHGDSINEIRTQALKPSLIISASKDESVRLWNVHTGICILIFAGAGGHRNEVLSVDFHPSDIYRIASCGMDNTVKIWSMKEFWPYVEQSFTWTDLPSKFPTKYVQFPVLVAVVHSNYVDCTRWLGDFILSKSVDNEIVLWEPKTKEQSPGEGSIDILQKYPVPECDIWFIKFSCDFHFNQLAIGNREGKVFVWEVQSSPPVLTARLTNPQCKSAIRQTAVSFDGSTILACSEDGSIWRWDEVDHPKA</sequence>
<dbReference type="EMBL" id="AY456262">
    <property type="protein sequence ID" value="AAS13489.1"/>
    <property type="molecule type" value="mRNA"/>
</dbReference>
<dbReference type="EMBL" id="AP003896">
    <property type="protein sequence ID" value="BAD03073.1"/>
    <property type="molecule type" value="Genomic_DNA"/>
</dbReference>
<dbReference type="EMBL" id="AP008214">
    <property type="protein sequence ID" value="BAF22867.1"/>
    <property type="molecule type" value="Genomic_DNA"/>
</dbReference>
<dbReference type="EMBL" id="AP014964">
    <property type="protein sequence ID" value="BAT03750.1"/>
    <property type="molecule type" value="Genomic_DNA"/>
</dbReference>
<dbReference type="EMBL" id="CM000145">
    <property type="protein sequence ID" value="EEE68010.1"/>
    <property type="molecule type" value="Genomic_DNA"/>
</dbReference>
<dbReference type="EMBL" id="AK111761">
    <property type="protein sequence ID" value="BAG99405.1"/>
    <property type="molecule type" value="mRNA"/>
</dbReference>
<dbReference type="RefSeq" id="XP_015649884.1">
    <property type="nucleotide sequence ID" value="XM_015794398.1"/>
</dbReference>
<dbReference type="RefSeq" id="XP_015649885.1">
    <property type="nucleotide sequence ID" value="XM_015794399.1"/>
</dbReference>
<dbReference type="SMR" id="Q6ZJX0"/>
<dbReference type="FunCoup" id="Q6ZJX0">
    <property type="interactions" value="1993"/>
</dbReference>
<dbReference type="STRING" id="39947.Q6ZJX0"/>
<dbReference type="PaxDb" id="39947-Q6ZJX0"/>
<dbReference type="EnsemblPlants" id="Os08t0137100-01">
    <property type="protein sequence ID" value="Os08t0137100-01"/>
    <property type="gene ID" value="Os08g0137100"/>
</dbReference>
<dbReference type="Gramene" id="Os08t0137100-01">
    <property type="protein sequence ID" value="Os08t0137100-01"/>
    <property type="gene ID" value="Os08g0137100"/>
</dbReference>
<dbReference type="KEGG" id="dosa:Os08g0137100"/>
<dbReference type="eggNOG" id="KOG1034">
    <property type="taxonomic scope" value="Eukaryota"/>
</dbReference>
<dbReference type="HOGENOM" id="CLU_032683_2_0_1"/>
<dbReference type="InParanoid" id="Q6ZJX0"/>
<dbReference type="OMA" id="RDVHRNY"/>
<dbReference type="OrthoDB" id="7318948at2759"/>
<dbReference type="Proteomes" id="UP000000763">
    <property type="component" value="Chromosome 8"/>
</dbReference>
<dbReference type="Proteomes" id="UP000007752">
    <property type="component" value="Chromosome 8"/>
</dbReference>
<dbReference type="Proteomes" id="UP000059680">
    <property type="component" value="Chromosome 8"/>
</dbReference>
<dbReference type="GO" id="GO:0005677">
    <property type="term" value="C:chromatin silencing complex"/>
    <property type="evidence" value="ECO:0000315"/>
    <property type="project" value="UniProtKB"/>
</dbReference>
<dbReference type="GO" id="GO:0035098">
    <property type="term" value="C:ESC/E(Z) complex"/>
    <property type="evidence" value="ECO:0000318"/>
    <property type="project" value="GO_Central"/>
</dbReference>
<dbReference type="GO" id="GO:0031519">
    <property type="term" value="C:PcG protein complex"/>
    <property type="evidence" value="ECO:0000314"/>
    <property type="project" value="UniProtKB"/>
</dbReference>
<dbReference type="GO" id="GO:0030154">
    <property type="term" value="P:cell differentiation"/>
    <property type="evidence" value="ECO:0007669"/>
    <property type="project" value="UniProtKB-KW"/>
</dbReference>
<dbReference type="GO" id="GO:0009960">
    <property type="term" value="P:endosperm development"/>
    <property type="evidence" value="ECO:0000315"/>
    <property type="project" value="UniProtKB"/>
</dbReference>
<dbReference type="GO" id="GO:0031507">
    <property type="term" value="P:heterochromatin formation"/>
    <property type="evidence" value="ECO:0000315"/>
    <property type="project" value="UniProtKB"/>
</dbReference>
<dbReference type="GO" id="GO:0010231">
    <property type="term" value="P:maintenance of seed dormancy"/>
    <property type="evidence" value="ECO:0000315"/>
    <property type="project" value="UniProtKB"/>
</dbReference>
<dbReference type="GO" id="GO:0000122">
    <property type="term" value="P:negative regulation of transcription by RNA polymerase II"/>
    <property type="evidence" value="ECO:0000318"/>
    <property type="project" value="GO_Central"/>
</dbReference>
<dbReference type="GO" id="GO:0090696">
    <property type="term" value="P:post-embryonic plant organ development"/>
    <property type="evidence" value="ECO:0000315"/>
    <property type="project" value="UniProtKB"/>
</dbReference>
<dbReference type="FunFam" id="2.130.10.10:FF:000268">
    <property type="entry name" value="polycomb group protein FIE1"/>
    <property type="match status" value="1"/>
</dbReference>
<dbReference type="Gene3D" id="2.130.10.10">
    <property type="entry name" value="YVTN repeat-like/Quinoprotein amine dehydrogenase"/>
    <property type="match status" value="1"/>
</dbReference>
<dbReference type="InterPro" id="IPR020472">
    <property type="entry name" value="G-protein_beta_WD-40_rep"/>
</dbReference>
<dbReference type="InterPro" id="IPR051243">
    <property type="entry name" value="PcG_WD-repeat"/>
</dbReference>
<dbReference type="InterPro" id="IPR015943">
    <property type="entry name" value="WD40/YVTN_repeat-like_dom_sf"/>
</dbReference>
<dbReference type="InterPro" id="IPR019775">
    <property type="entry name" value="WD40_repeat_CS"/>
</dbReference>
<dbReference type="InterPro" id="IPR036322">
    <property type="entry name" value="WD40_repeat_dom_sf"/>
</dbReference>
<dbReference type="InterPro" id="IPR001680">
    <property type="entry name" value="WD40_rpt"/>
</dbReference>
<dbReference type="PANTHER" id="PTHR10253">
    <property type="entry name" value="POLYCOMB PROTEIN"/>
    <property type="match status" value="1"/>
</dbReference>
<dbReference type="Pfam" id="PF00400">
    <property type="entry name" value="WD40"/>
    <property type="match status" value="3"/>
</dbReference>
<dbReference type="PRINTS" id="PR00320">
    <property type="entry name" value="GPROTEINBRPT"/>
</dbReference>
<dbReference type="SMART" id="SM00320">
    <property type="entry name" value="WD40"/>
    <property type="match status" value="6"/>
</dbReference>
<dbReference type="SUPFAM" id="SSF50978">
    <property type="entry name" value="WD40 repeat-like"/>
    <property type="match status" value="1"/>
</dbReference>
<dbReference type="PROSITE" id="PS00678">
    <property type="entry name" value="WD_REPEATS_1"/>
    <property type="match status" value="1"/>
</dbReference>
<dbReference type="PROSITE" id="PS50082">
    <property type="entry name" value="WD_REPEATS_2"/>
    <property type="match status" value="2"/>
</dbReference>
<dbReference type="PROSITE" id="PS50294">
    <property type="entry name" value="WD_REPEATS_REGION"/>
    <property type="match status" value="1"/>
</dbReference>
<organism>
    <name type="scientific">Oryza sativa subsp. japonica</name>
    <name type="common">Rice</name>
    <dbReference type="NCBI Taxonomy" id="39947"/>
    <lineage>
        <taxon>Eukaryota</taxon>
        <taxon>Viridiplantae</taxon>
        <taxon>Streptophyta</taxon>
        <taxon>Embryophyta</taxon>
        <taxon>Tracheophyta</taxon>
        <taxon>Spermatophyta</taxon>
        <taxon>Magnoliopsida</taxon>
        <taxon>Liliopsida</taxon>
        <taxon>Poales</taxon>
        <taxon>Poaceae</taxon>
        <taxon>BOP clade</taxon>
        <taxon>Oryzoideae</taxon>
        <taxon>Oryzeae</taxon>
        <taxon>Oryzinae</taxon>
        <taxon>Oryza</taxon>
        <taxon>Oryza sativa</taxon>
    </lineage>
</organism>
<name>FIE2_ORYSJ</name>
<gene>
    <name evidence="8" type="primary">FIE2</name>
    <name evidence="12" type="ordered locus">Os08g0137100</name>
    <name evidence="10" type="ordered locus">LOC_Os08g04270</name>
    <name evidence="11" type="ORF">OJ1613_G04.20</name>
    <name evidence="13" type="ORF">OsJ_25971</name>
</gene>
<accession>Q6ZJX0</accession>
<accession>A1KXU8</accession>
<keyword id="KW-0156">Chromatin regulator</keyword>
<keyword id="KW-0217">Developmental protein</keyword>
<keyword id="KW-0221">Differentiation</keyword>
<keyword id="KW-1185">Reference proteome</keyword>
<keyword id="KW-0677">Repeat</keyword>
<keyword id="KW-0804">Transcription</keyword>
<keyword id="KW-0805">Transcription regulation</keyword>
<keyword id="KW-0853">WD repeat</keyword>
<proteinExistence type="evidence at protein level"/>
<reference key="1">
    <citation type="journal article" date="2012" name="Plant Biotechnol. Rep.">
        <title>Involvement of rice polycomb protein OsFIE2 in plant growth and seed size.</title>
        <authorList>
            <person name="Na J.K."/>
            <person name="Seo M.H."/>
            <person name="Yoon I.S."/>
            <person name="Lee Y.H."/>
            <person name="Lee K.O."/>
            <person name="Kim D.Y."/>
        </authorList>
    </citation>
    <scope>NUCLEOTIDE SEQUENCE [MRNA]</scope>
    <scope>INTERACTION WITH EZ1</scope>
</reference>
<reference key="2">
    <citation type="journal article" date="2005" name="Nature">
        <title>The map-based sequence of the rice genome.</title>
        <authorList>
            <consortium name="International rice genome sequencing project (IRGSP)"/>
        </authorList>
    </citation>
    <scope>NUCLEOTIDE SEQUENCE [LARGE SCALE GENOMIC DNA]</scope>
    <source>
        <strain>cv. Nipponbare</strain>
    </source>
</reference>
<reference key="3">
    <citation type="journal article" date="2008" name="Nucleic Acids Res.">
        <title>The rice annotation project database (RAP-DB): 2008 update.</title>
        <authorList>
            <consortium name="The rice annotation project (RAP)"/>
        </authorList>
    </citation>
    <scope>GENOME REANNOTATION</scope>
    <source>
        <strain>cv. Nipponbare</strain>
    </source>
</reference>
<reference key="4">
    <citation type="journal article" date="2013" name="Rice">
        <title>Improvement of the Oryza sativa Nipponbare reference genome using next generation sequence and optical map data.</title>
        <authorList>
            <person name="Kawahara Y."/>
            <person name="de la Bastide M."/>
            <person name="Hamilton J.P."/>
            <person name="Kanamori H."/>
            <person name="McCombie W.R."/>
            <person name="Ouyang S."/>
            <person name="Schwartz D.C."/>
            <person name="Tanaka T."/>
            <person name="Wu J."/>
            <person name="Zhou S."/>
            <person name="Childs K.L."/>
            <person name="Davidson R.M."/>
            <person name="Lin H."/>
            <person name="Quesada-Ocampo L."/>
            <person name="Vaillancourt B."/>
            <person name="Sakai H."/>
            <person name="Lee S.S."/>
            <person name="Kim J."/>
            <person name="Numa H."/>
            <person name="Itoh T."/>
            <person name="Buell C.R."/>
            <person name="Matsumoto T."/>
        </authorList>
    </citation>
    <scope>GENOME REANNOTATION</scope>
    <source>
        <strain>cv. Nipponbare</strain>
    </source>
</reference>
<reference key="5">
    <citation type="journal article" date="2005" name="PLoS Biol.">
        <title>The genomes of Oryza sativa: a history of duplications.</title>
        <authorList>
            <person name="Yu J."/>
            <person name="Wang J."/>
            <person name="Lin W."/>
            <person name="Li S."/>
            <person name="Li H."/>
            <person name="Zhou J."/>
            <person name="Ni P."/>
            <person name="Dong W."/>
            <person name="Hu S."/>
            <person name="Zeng C."/>
            <person name="Zhang J."/>
            <person name="Zhang Y."/>
            <person name="Li R."/>
            <person name="Xu Z."/>
            <person name="Li S."/>
            <person name="Li X."/>
            <person name="Zheng H."/>
            <person name="Cong L."/>
            <person name="Lin L."/>
            <person name="Yin J."/>
            <person name="Geng J."/>
            <person name="Li G."/>
            <person name="Shi J."/>
            <person name="Liu J."/>
            <person name="Lv H."/>
            <person name="Li J."/>
            <person name="Wang J."/>
            <person name="Deng Y."/>
            <person name="Ran L."/>
            <person name="Shi X."/>
            <person name="Wang X."/>
            <person name="Wu Q."/>
            <person name="Li C."/>
            <person name="Ren X."/>
            <person name="Wang J."/>
            <person name="Wang X."/>
            <person name="Li D."/>
            <person name="Liu D."/>
            <person name="Zhang X."/>
            <person name="Ji Z."/>
            <person name="Zhao W."/>
            <person name="Sun Y."/>
            <person name="Zhang Z."/>
            <person name="Bao J."/>
            <person name="Han Y."/>
            <person name="Dong L."/>
            <person name="Ji J."/>
            <person name="Chen P."/>
            <person name="Wu S."/>
            <person name="Liu J."/>
            <person name="Xiao Y."/>
            <person name="Bu D."/>
            <person name="Tan J."/>
            <person name="Yang L."/>
            <person name="Ye C."/>
            <person name="Zhang J."/>
            <person name="Xu J."/>
            <person name="Zhou Y."/>
            <person name="Yu Y."/>
            <person name="Zhang B."/>
            <person name="Zhuang S."/>
            <person name="Wei H."/>
            <person name="Liu B."/>
            <person name="Lei M."/>
            <person name="Yu H."/>
            <person name="Li Y."/>
            <person name="Xu H."/>
            <person name="Wei S."/>
            <person name="He X."/>
            <person name="Fang L."/>
            <person name="Zhang Z."/>
            <person name="Zhang Y."/>
            <person name="Huang X."/>
            <person name="Su Z."/>
            <person name="Tong W."/>
            <person name="Li J."/>
            <person name="Tong Z."/>
            <person name="Li S."/>
            <person name="Ye J."/>
            <person name="Wang L."/>
            <person name="Fang L."/>
            <person name="Lei T."/>
            <person name="Chen C.-S."/>
            <person name="Chen H.-C."/>
            <person name="Xu Z."/>
            <person name="Li H."/>
            <person name="Huang H."/>
            <person name="Zhang F."/>
            <person name="Xu H."/>
            <person name="Li N."/>
            <person name="Zhao C."/>
            <person name="Li S."/>
            <person name="Dong L."/>
            <person name="Huang Y."/>
            <person name="Li L."/>
            <person name="Xi Y."/>
            <person name="Qi Q."/>
            <person name="Li W."/>
            <person name="Zhang B."/>
            <person name="Hu W."/>
            <person name="Zhang Y."/>
            <person name="Tian X."/>
            <person name="Jiao Y."/>
            <person name="Liang X."/>
            <person name="Jin J."/>
            <person name="Gao L."/>
            <person name="Zheng W."/>
            <person name="Hao B."/>
            <person name="Liu S.-M."/>
            <person name="Wang W."/>
            <person name="Yuan L."/>
            <person name="Cao M."/>
            <person name="McDermott J."/>
            <person name="Samudrala R."/>
            <person name="Wang J."/>
            <person name="Wong G.K.-S."/>
            <person name="Yang H."/>
        </authorList>
    </citation>
    <scope>NUCLEOTIDE SEQUENCE [LARGE SCALE GENOMIC DNA]</scope>
    <source>
        <strain>cv. Nipponbare</strain>
    </source>
</reference>
<reference key="6">
    <citation type="journal article" date="2003" name="Science">
        <title>Collection, mapping, and annotation of over 28,000 cDNA clones from japonica rice.</title>
        <authorList>
            <consortium name="The rice full-length cDNA consortium"/>
        </authorList>
    </citation>
    <scope>NUCLEOTIDE SEQUENCE [LARGE SCALE MRNA]</scope>
    <source>
        <strain>cv. Nipponbare</strain>
    </source>
</reference>
<reference key="7">
    <citation type="journal article" date="2009" name="Mol. Plant">
        <title>Expression, imprinting, and evolution of rice homologs of the polycomb group genes.</title>
        <authorList>
            <person name="Luo M."/>
            <person name="Platten D."/>
            <person name="Chaudhury A."/>
            <person name="Peacock W.J."/>
            <person name="Dennis E.S."/>
        </authorList>
    </citation>
    <scope>TISSUE SPECIFICITY</scope>
</reference>
<reference key="8">
    <citation type="journal article" date="2012" name="BMC Genomics">
        <title>Genomic survey, expression profile and co-expression network analysis of OsWD40 family in rice.</title>
        <authorList>
            <person name="Ouyang Y."/>
            <person name="Huang X."/>
            <person name="Lu Z."/>
            <person name="Yao J."/>
        </authorList>
    </citation>
    <scope>GENE FAMILY</scope>
    <scope>NOMENCLATURE</scope>
    <scope>TISSUE SPECIFICITY</scope>
</reference>
<reference key="9">
    <citation type="journal article" date="2012" name="Plant Cell">
        <title>Identification and characterization of an epi-allele of FIE1 reveals a regulatory linkage between two epigenetic marks in rice.</title>
        <authorList>
            <person name="Zhang L."/>
            <person name="Cheng Z."/>
            <person name="Qin R."/>
            <person name="Qiu Y."/>
            <person name="Wang J.L."/>
            <person name="Cui X."/>
            <person name="Gu L."/>
            <person name="Zhang X."/>
            <person name="Guo X."/>
            <person name="Wang D."/>
            <person name="Jiang L."/>
            <person name="Wu C.Y."/>
            <person name="Wang H."/>
            <person name="Cao X."/>
            <person name="Wan J."/>
        </authorList>
    </citation>
    <scope>INTERACTION WITH EZ1</scope>
</reference>
<reference key="10">
    <citation type="journal article" date="2013" name="PLoS Genet.">
        <title>Polycomb group gene OsFIE2 regulates rice (Oryza sativa) seed development and grain filling via a mechanism distinct from Arabidopsis.</title>
        <authorList>
            <person name="Nallamilli B.R."/>
            <person name="Zhang J."/>
            <person name="Mujahid H."/>
            <person name="Malone B.M."/>
            <person name="Bridges S.M."/>
            <person name="Peng Z."/>
        </authorList>
    </citation>
    <scope>IDENTIFICATION BY MASS SPECTROMETRY</scope>
    <scope>FUNCTION</scope>
    <scope>SUBUNIT</scope>
    <scope>INTERACTION WITH EZ1</scope>
</reference>
<reference key="11">
    <citation type="journal article" date="2014" name="New Phytol.">
        <title>OsFIE2 plays an essential role in the regulation of rice vegetative and reproductive development.</title>
        <authorList>
            <person name="Li S."/>
            <person name="Zhou B."/>
            <person name="Peng X."/>
            <person name="Kuang Q."/>
            <person name="Huang X."/>
            <person name="Yao J."/>
            <person name="Du B."/>
            <person name="Sun M.X."/>
        </authorList>
    </citation>
    <scope>FUNCTION</scope>
</reference>
<protein>
    <recommendedName>
        <fullName evidence="10">Polycomb group protein FIE1</fullName>
    </recommendedName>
    <alternativeName>
        <fullName evidence="8">Protein FERTILIZATION-INDEPENDENT ENDOSPERM 2</fullName>
        <shortName evidence="8">OsFIE2</shortName>
    </alternativeName>
    <alternativeName>
        <fullName evidence="9">WD40 repeat-containing protein 153</fullName>
        <shortName evidence="9">OsWD40-153</shortName>
    </alternativeName>
</protein>
<comment type="function">
    <text evidence="5 6">Polycomb group (PcG) protein. PcG proteins act by forming multiprotein complexes, which are required to maintain the transcriptionally repressive state of homeotic genes throughout development. PcG proteins are not required to initiate repression, but to maintain it during later stages of development. They act via the methylation of histones, rendering chromatin heritably changed in its expressibility (PubMed:23505380, PubMed:24020752). Involved in the regulation of seed endosperm development, grain filling and seed dormancy. FIE2-containing PcG complex in seed endosperm regulates the expression of various transcription factors by trimethylation on histone H3 'Lys-27' (H3K27me3) of target genes. Involved in the overall expression regulation of a large number of nutrient metabolism genes (PubMed:23505380). Involved in the regulation of seed endosperm development. Involved in the regulation of vegetative development, particularly in stem cell maintenance in the root system, where it maintains the suppression of key differentiation regulators (PubMed:24020752).</text>
</comment>
<comment type="subunit">
    <text evidence="4 5 7">Interacts with EZ1 (PubMed:23150632, PubMed:23505380, Ref.1). Component of the polycomb repressive complex 2 (PRC2), composed of the core PRC2 components EMF2B, EZ1 and CLF. PRC2 methylates 'Lys-27' residues of histone H3 (H3K27me3), leading to transcriptional repression of the affected target gene (PubMed:23505380).</text>
</comment>
<comment type="tissue specificity">
    <text evidence="2 3">Widely expressed.</text>
</comment>
<comment type="miscellaneous">
    <text evidence="5 6">Plants silencing FIE2 have small and partially filled seeds, and exhibit seed germination before seed maturation (PubMed:23505380). Plant silencing FIE2 exhibit aberrant pleiotropic phenotypes in vegetative and reproductive organ generation, and derepression of some developmental regulators, such as MADS3 and OSH5 genes (PubMed:24020752).</text>
</comment>
<comment type="similarity">
    <text evidence="10">Belongs to the WD repeat ESC family.</text>
</comment>
<evidence type="ECO:0000255" key="1"/>
<evidence type="ECO:0000269" key="2">
    <source>
    </source>
</evidence>
<evidence type="ECO:0000269" key="3">
    <source>
    </source>
</evidence>
<evidence type="ECO:0000269" key="4">
    <source>
    </source>
</evidence>
<evidence type="ECO:0000269" key="5">
    <source>
    </source>
</evidence>
<evidence type="ECO:0000269" key="6">
    <source>
    </source>
</evidence>
<evidence type="ECO:0000269" key="7">
    <source ref="1"/>
</evidence>
<evidence type="ECO:0000303" key="8">
    <source>
    </source>
</evidence>
<evidence type="ECO:0000303" key="9">
    <source>
    </source>
</evidence>
<evidence type="ECO:0000305" key="10"/>
<evidence type="ECO:0000312" key="11">
    <source>
        <dbReference type="EMBL" id="BAD03073.1"/>
    </source>
</evidence>
<evidence type="ECO:0000312" key="12">
    <source>
        <dbReference type="EMBL" id="BAF22867.1"/>
    </source>
</evidence>
<evidence type="ECO:0000312" key="13">
    <source>
        <dbReference type="EMBL" id="EEE68010.1"/>
    </source>
</evidence>